<comment type="function">
    <text evidence="1">Involved in mRNA degradation. Catalyzes the phosphorolysis of single-stranded polyribonucleotides processively in the 3'- to 5'-direction.</text>
</comment>
<comment type="catalytic activity">
    <reaction evidence="1">
        <text>RNA(n+1) + phosphate = RNA(n) + a ribonucleoside 5'-diphosphate</text>
        <dbReference type="Rhea" id="RHEA:22096"/>
        <dbReference type="Rhea" id="RHEA-COMP:14527"/>
        <dbReference type="Rhea" id="RHEA-COMP:17342"/>
        <dbReference type="ChEBI" id="CHEBI:43474"/>
        <dbReference type="ChEBI" id="CHEBI:57930"/>
        <dbReference type="ChEBI" id="CHEBI:140395"/>
        <dbReference type="EC" id="2.7.7.8"/>
    </reaction>
</comment>
<comment type="cofactor">
    <cofactor evidence="1">
        <name>Mg(2+)</name>
        <dbReference type="ChEBI" id="CHEBI:18420"/>
    </cofactor>
</comment>
<comment type="subcellular location">
    <subcellularLocation>
        <location evidence="1">Cytoplasm</location>
    </subcellularLocation>
</comment>
<comment type="similarity">
    <text evidence="1">Belongs to the polyribonucleotide nucleotidyltransferase family.</text>
</comment>
<sequence>MQHIKLEFENLSEQYSFNYVAQAANGGILYQNGGSVLLASVCTQENEKYDDEFLPLSVQYIEKTYANNKFPSGFIKREGKPSEFEILTSRLIDRTLRPLFPKGYTYITSIVVMVLSYDGKSDLQLNALNAAACALYVSDLPLESLQDKAVSGVRIGRKDGHFIINPTMEQLSESELNLFVSGRDDELLMIEMKSIRTAQGANELSEENFLEALECAKNYIKNATQTYHQQFAPYKKSPFAFESANDELDEQLLNIIQTHYHTPITEAIKHMAKSERHTQLKALIKQVVRECEIEDEKKVQEHIMAYKRKLVREMILQSHIRADGRGLKDVRPISIQTNILPFAHGSVLFTRGQTQALVSATIGGDNDAQNYEMLGSKNALKKRFLFHYNFPSFSVGEASMIGSVGRRELGHGNLAKRALHSSVQEQDKTIRLVSEILESNGSSSMASVCGGSLALCACGIKVESLIAGVAMGLVTQDEQCAILTDISGLEDHDGDMDFKVAGGYKGISAMQMDIKLGGITQEILCQALFQAKEAREQILAIMEEARAKIVLNDVILPKSESFMIPPHKIVEVIGAGGRVIKDIIERFEVSIDLARESGMVSVSASNVENLQKAKTFILQLVSSAGTKKEYEKVDWESYAVGERFVGKIKKIVDFGIFVELPRGGDGLIHISKITKDKTQQLSEIFHNVSELECEILSQNKNKVELGLVE</sequence>
<evidence type="ECO:0000255" key="1">
    <source>
        <dbReference type="HAMAP-Rule" id="MF_01595"/>
    </source>
</evidence>
<organism>
    <name type="scientific">Helicobacter hepaticus (strain ATCC 51449 / 3B1)</name>
    <dbReference type="NCBI Taxonomy" id="235279"/>
    <lineage>
        <taxon>Bacteria</taxon>
        <taxon>Pseudomonadati</taxon>
        <taxon>Campylobacterota</taxon>
        <taxon>Epsilonproteobacteria</taxon>
        <taxon>Campylobacterales</taxon>
        <taxon>Helicobacteraceae</taxon>
        <taxon>Helicobacter</taxon>
    </lineage>
</organism>
<reference key="1">
    <citation type="journal article" date="2003" name="Proc. Natl. Acad. Sci. U.S.A.">
        <title>The complete genome sequence of the carcinogenic bacterium Helicobacter hepaticus.</title>
        <authorList>
            <person name="Suerbaum S."/>
            <person name="Josenhans C."/>
            <person name="Sterzenbach T."/>
            <person name="Drescher B."/>
            <person name="Brandt P."/>
            <person name="Bell M."/>
            <person name="Droege M."/>
            <person name="Fartmann B."/>
            <person name="Fischer H.-P."/>
            <person name="Ge Z."/>
            <person name="Hoerster A."/>
            <person name="Holland R."/>
            <person name="Klein K."/>
            <person name="Koenig J."/>
            <person name="Macko L."/>
            <person name="Mendz G.L."/>
            <person name="Nyakatura G."/>
            <person name="Schauer D.B."/>
            <person name="Shen Z."/>
            <person name="Weber J."/>
            <person name="Frosch M."/>
            <person name="Fox J.G."/>
        </authorList>
    </citation>
    <scope>NUCLEOTIDE SEQUENCE [LARGE SCALE GENOMIC DNA]</scope>
    <source>
        <strain>ATCC 51449 / 3B1</strain>
    </source>
</reference>
<proteinExistence type="inferred from homology"/>
<keyword id="KW-0963">Cytoplasm</keyword>
<keyword id="KW-0460">Magnesium</keyword>
<keyword id="KW-0479">Metal-binding</keyword>
<keyword id="KW-0548">Nucleotidyltransferase</keyword>
<keyword id="KW-1185">Reference proteome</keyword>
<keyword id="KW-0694">RNA-binding</keyword>
<keyword id="KW-0808">Transferase</keyword>
<accession>Q7VIL0</accession>
<feature type="chain" id="PRO_0000329677" description="Polyribonucleotide nucleotidyltransferase">
    <location>
        <begin position="1"/>
        <end position="709"/>
    </location>
</feature>
<feature type="domain" description="KH" evidence="1">
    <location>
        <begin position="557"/>
        <end position="617"/>
    </location>
</feature>
<feature type="domain" description="S1 motif" evidence="1">
    <location>
        <begin position="641"/>
        <end position="709"/>
    </location>
</feature>
<feature type="binding site" evidence="1">
    <location>
        <position position="491"/>
    </location>
    <ligand>
        <name>Mg(2+)</name>
        <dbReference type="ChEBI" id="CHEBI:18420"/>
    </ligand>
</feature>
<feature type="binding site" evidence="1">
    <location>
        <position position="497"/>
    </location>
    <ligand>
        <name>Mg(2+)</name>
        <dbReference type="ChEBI" id="CHEBI:18420"/>
    </ligand>
</feature>
<gene>
    <name evidence="1" type="primary">pnp</name>
    <name type="ordered locus">HH_0594</name>
</gene>
<dbReference type="EC" id="2.7.7.8" evidence="1"/>
<dbReference type="EMBL" id="AE017125">
    <property type="protein sequence ID" value="AAP77191.1"/>
    <property type="molecule type" value="Genomic_DNA"/>
</dbReference>
<dbReference type="RefSeq" id="WP_011115436.1">
    <property type="nucleotide sequence ID" value="NC_004917.1"/>
</dbReference>
<dbReference type="SMR" id="Q7VIL0"/>
<dbReference type="STRING" id="235279.HH_0594"/>
<dbReference type="KEGG" id="hhe:HH_0594"/>
<dbReference type="eggNOG" id="COG1185">
    <property type="taxonomic scope" value="Bacteria"/>
</dbReference>
<dbReference type="HOGENOM" id="CLU_004217_2_2_7"/>
<dbReference type="OrthoDB" id="9804305at2"/>
<dbReference type="Proteomes" id="UP000002495">
    <property type="component" value="Chromosome"/>
</dbReference>
<dbReference type="GO" id="GO:0005829">
    <property type="term" value="C:cytosol"/>
    <property type="evidence" value="ECO:0007669"/>
    <property type="project" value="TreeGrafter"/>
</dbReference>
<dbReference type="GO" id="GO:0000175">
    <property type="term" value="F:3'-5'-RNA exonuclease activity"/>
    <property type="evidence" value="ECO:0007669"/>
    <property type="project" value="TreeGrafter"/>
</dbReference>
<dbReference type="GO" id="GO:0000287">
    <property type="term" value="F:magnesium ion binding"/>
    <property type="evidence" value="ECO:0007669"/>
    <property type="project" value="UniProtKB-UniRule"/>
</dbReference>
<dbReference type="GO" id="GO:0004654">
    <property type="term" value="F:polyribonucleotide nucleotidyltransferase activity"/>
    <property type="evidence" value="ECO:0007669"/>
    <property type="project" value="UniProtKB-UniRule"/>
</dbReference>
<dbReference type="GO" id="GO:0003723">
    <property type="term" value="F:RNA binding"/>
    <property type="evidence" value="ECO:0007669"/>
    <property type="project" value="UniProtKB-UniRule"/>
</dbReference>
<dbReference type="GO" id="GO:0006402">
    <property type="term" value="P:mRNA catabolic process"/>
    <property type="evidence" value="ECO:0007669"/>
    <property type="project" value="UniProtKB-UniRule"/>
</dbReference>
<dbReference type="GO" id="GO:0006396">
    <property type="term" value="P:RNA processing"/>
    <property type="evidence" value="ECO:0007669"/>
    <property type="project" value="InterPro"/>
</dbReference>
<dbReference type="CDD" id="cd02393">
    <property type="entry name" value="KH-I_PNPase"/>
    <property type="match status" value="1"/>
</dbReference>
<dbReference type="CDD" id="cd11364">
    <property type="entry name" value="RNase_PH_PNPase_2"/>
    <property type="match status" value="1"/>
</dbReference>
<dbReference type="FunFam" id="3.30.1370.10:FF:000001">
    <property type="entry name" value="Polyribonucleotide nucleotidyltransferase"/>
    <property type="match status" value="1"/>
</dbReference>
<dbReference type="FunFam" id="3.30.230.70:FF:000029">
    <property type="entry name" value="Polyribonucleotide nucleotidyltransferase"/>
    <property type="match status" value="1"/>
</dbReference>
<dbReference type="Gene3D" id="3.30.230.70">
    <property type="entry name" value="GHMP Kinase, N-terminal domain"/>
    <property type="match status" value="2"/>
</dbReference>
<dbReference type="Gene3D" id="3.30.1370.10">
    <property type="entry name" value="K Homology domain, type 1"/>
    <property type="match status" value="1"/>
</dbReference>
<dbReference type="Gene3D" id="2.40.50.140">
    <property type="entry name" value="Nucleic acid-binding proteins"/>
    <property type="match status" value="1"/>
</dbReference>
<dbReference type="HAMAP" id="MF_01595">
    <property type="entry name" value="PNPase"/>
    <property type="match status" value="1"/>
</dbReference>
<dbReference type="InterPro" id="IPR001247">
    <property type="entry name" value="ExoRNase_PH_dom1"/>
</dbReference>
<dbReference type="InterPro" id="IPR015847">
    <property type="entry name" value="ExoRNase_PH_dom2"/>
</dbReference>
<dbReference type="InterPro" id="IPR036345">
    <property type="entry name" value="ExoRNase_PH_dom2_sf"/>
</dbReference>
<dbReference type="InterPro" id="IPR004087">
    <property type="entry name" value="KH_dom"/>
</dbReference>
<dbReference type="InterPro" id="IPR004088">
    <property type="entry name" value="KH_dom_type_1"/>
</dbReference>
<dbReference type="InterPro" id="IPR036612">
    <property type="entry name" value="KH_dom_type_1_sf"/>
</dbReference>
<dbReference type="InterPro" id="IPR012340">
    <property type="entry name" value="NA-bd_OB-fold"/>
</dbReference>
<dbReference type="InterPro" id="IPR012162">
    <property type="entry name" value="PNPase"/>
</dbReference>
<dbReference type="InterPro" id="IPR027408">
    <property type="entry name" value="PNPase/RNase_PH_dom_sf"/>
</dbReference>
<dbReference type="InterPro" id="IPR015848">
    <property type="entry name" value="PNPase_PH_RNA-bd_bac/org-type"/>
</dbReference>
<dbReference type="InterPro" id="IPR020568">
    <property type="entry name" value="Ribosomal_Su5_D2-typ_SF"/>
</dbReference>
<dbReference type="InterPro" id="IPR003029">
    <property type="entry name" value="S1_domain"/>
</dbReference>
<dbReference type="NCBIfam" id="TIGR03591">
    <property type="entry name" value="polynuc_phos"/>
    <property type="match status" value="1"/>
</dbReference>
<dbReference type="NCBIfam" id="NF008805">
    <property type="entry name" value="PRK11824.1"/>
    <property type="match status" value="1"/>
</dbReference>
<dbReference type="PANTHER" id="PTHR11252">
    <property type="entry name" value="POLYRIBONUCLEOTIDE NUCLEOTIDYLTRANSFERASE"/>
    <property type="match status" value="1"/>
</dbReference>
<dbReference type="PANTHER" id="PTHR11252:SF0">
    <property type="entry name" value="POLYRIBONUCLEOTIDE NUCLEOTIDYLTRANSFERASE 1, MITOCHONDRIAL"/>
    <property type="match status" value="1"/>
</dbReference>
<dbReference type="Pfam" id="PF00013">
    <property type="entry name" value="KH_1"/>
    <property type="match status" value="1"/>
</dbReference>
<dbReference type="Pfam" id="PF03726">
    <property type="entry name" value="PNPase"/>
    <property type="match status" value="1"/>
</dbReference>
<dbReference type="Pfam" id="PF01138">
    <property type="entry name" value="RNase_PH"/>
    <property type="match status" value="2"/>
</dbReference>
<dbReference type="Pfam" id="PF03725">
    <property type="entry name" value="RNase_PH_C"/>
    <property type="match status" value="2"/>
</dbReference>
<dbReference type="Pfam" id="PF00575">
    <property type="entry name" value="S1"/>
    <property type="match status" value="1"/>
</dbReference>
<dbReference type="PIRSF" id="PIRSF005499">
    <property type="entry name" value="PNPase"/>
    <property type="match status" value="1"/>
</dbReference>
<dbReference type="SMART" id="SM00322">
    <property type="entry name" value="KH"/>
    <property type="match status" value="1"/>
</dbReference>
<dbReference type="SMART" id="SM00316">
    <property type="entry name" value="S1"/>
    <property type="match status" value="1"/>
</dbReference>
<dbReference type="SUPFAM" id="SSF54791">
    <property type="entry name" value="Eukaryotic type KH-domain (KH-domain type I)"/>
    <property type="match status" value="1"/>
</dbReference>
<dbReference type="SUPFAM" id="SSF50249">
    <property type="entry name" value="Nucleic acid-binding proteins"/>
    <property type="match status" value="1"/>
</dbReference>
<dbReference type="SUPFAM" id="SSF55666">
    <property type="entry name" value="Ribonuclease PH domain 2-like"/>
    <property type="match status" value="2"/>
</dbReference>
<dbReference type="SUPFAM" id="SSF54211">
    <property type="entry name" value="Ribosomal protein S5 domain 2-like"/>
    <property type="match status" value="2"/>
</dbReference>
<dbReference type="PROSITE" id="PS50084">
    <property type="entry name" value="KH_TYPE_1"/>
    <property type="match status" value="1"/>
</dbReference>
<dbReference type="PROSITE" id="PS50126">
    <property type="entry name" value="S1"/>
    <property type="match status" value="1"/>
</dbReference>
<name>PNP_HELHP</name>
<protein>
    <recommendedName>
        <fullName evidence="1">Polyribonucleotide nucleotidyltransferase</fullName>
        <ecNumber evidence="1">2.7.7.8</ecNumber>
    </recommendedName>
    <alternativeName>
        <fullName evidence="1">Polynucleotide phosphorylase</fullName>
        <shortName evidence="1">PNPase</shortName>
    </alternativeName>
</protein>